<proteinExistence type="inferred from homology"/>
<reference key="1">
    <citation type="journal article" date="1991" name="Virology">
        <title>Characterization of the complete RhPV 1 genomic sequence and an integration locus from a metastatic tumor.</title>
        <authorList>
            <person name="Ostrow R.S."/>
            <person name="Labresh K.V."/>
            <person name="Faras A.J."/>
        </authorList>
    </citation>
    <scope>NUCLEOTIDE SEQUENCE [GENOMIC DNA]</scope>
</reference>
<organismHost>
    <name type="scientific">Macaca mulatta</name>
    <name type="common">Rhesus macaque</name>
    <dbReference type="NCBI Taxonomy" id="9544"/>
</organismHost>
<gene>
    <name type="primary">E4</name>
</gene>
<organism>
    <name type="scientific">Macaca mulata papillomavirus 1</name>
    <name type="common">Rhpv 1</name>
    <name type="synonym">Rhesus papillomavirus type 1</name>
    <dbReference type="NCBI Taxonomy" id="2779844"/>
    <lineage>
        <taxon>Viruses</taxon>
        <taxon>Monodnaviria</taxon>
        <taxon>Shotokuvirae</taxon>
        <taxon>Cossaviricota</taxon>
        <taxon>Papovaviricetes</taxon>
        <taxon>Zurhausenvirales</taxon>
        <taxon>Papillomaviridae</taxon>
        <taxon>Firstpapillomavirinae</taxon>
        <taxon>Alphapapillomavirus</taxon>
        <taxon>Rhesus papillomavirus type 1</taxon>
    </lineage>
</organism>
<comment type="similarity">
    <text evidence="1">Belongs to the papillomaviridae E4 protein family.</text>
</comment>
<feature type="chain" id="PRO_0000133285" description="Probable protein E4">
    <location>
        <begin position="1"/>
        <end position="91"/>
    </location>
</feature>
<dbReference type="EMBL" id="M60184">
    <property type="status" value="NOT_ANNOTATED_CDS"/>
    <property type="molecule type" value="Genomic_DNA"/>
</dbReference>
<dbReference type="PIR" id="E38503">
    <property type="entry name" value="W4WLR1"/>
</dbReference>
<dbReference type="SMR" id="P24832"/>
<dbReference type="Proteomes" id="UP000008169">
    <property type="component" value="Genome"/>
</dbReference>
<dbReference type="InterPro" id="IPR003861">
    <property type="entry name" value="Papilloma_E4"/>
</dbReference>
<dbReference type="Pfam" id="PF02711">
    <property type="entry name" value="Pap_E4"/>
    <property type="match status" value="1"/>
</dbReference>
<name>VE4_MMPV1</name>
<sequence length="91" mass="9813">CIILTLCLALPTATNYPLLKLLADCNTSTHHPPPPTPAPRKTCGHRLQSECVGQTQVEIQCGPWTVKAGQSFVDLHTTTLQGVPVTVTIRL</sequence>
<keyword id="KW-0244">Early protein</keyword>
<keyword id="KW-1185">Reference proteome</keyword>
<protein>
    <recommendedName>
        <fullName>Probable protein E4</fullName>
    </recommendedName>
</protein>
<accession>P24832</accession>
<evidence type="ECO:0000305" key="1"/>